<dbReference type="EMBL" id="CP000822">
    <property type="protein sequence ID" value="ABV15880.1"/>
    <property type="molecule type" value="Genomic_DNA"/>
</dbReference>
<dbReference type="RefSeq" id="WP_012135521.1">
    <property type="nucleotide sequence ID" value="NC_009792.1"/>
</dbReference>
<dbReference type="SMR" id="A8AQW7"/>
<dbReference type="STRING" id="290338.CKO_04835"/>
<dbReference type="GeneID" id="45138335"/>
<dbReference type="KEGG" id="cko:CKO_04835"/>
<dbReference type="HOGENOM" id="CLU_094569_0_0_6"/>
<dbReference type="OrthoDB" id="9785450at2"/>
<dbReference type="Proteomes" id="UP000008148">
    <property type="component" value="Chromosome"/>
</dbReference>
<dbReference type="GO" id="GO:0051539">
    <property type="term" value="F:4 iron, 4 sulfur cluster binding"/>
    <property type="evidence" value="ECO:0007669"/>
    <property type="project" value="UniProtKB-UniRule"/>
</dbReference>
<dbReference type="GO" id="GO:0005506">
    <property type="term" value="F:iron ion binding"/>
    <property type="evidence" value="ECO:0007669"/>
    <property type="project" value="InterPro"/>
</dbReference>
<dbReference type="GO" id="GO:0016226">
    <property type="term" value="P:iron-sulfur cluster assembly"/>
    <property type="evidence" value="ECO:0007669"/>
    <property type="project" value="UniProtKB-UniRule"/>
</dbReference>
<dbReference type="GO" id="GO:0051604">
    <property type="term" value="P:protein maturation"/>
    <property type="evidence" value="ECO:0007669"/>
    <property type="project" value="UniProtKB-UniRule"/>
</dbReference>
<dbReference type="FunFam" id="2.60.300.12:FF:000004">
    <property type="entry name" value="Fe/S biogenesis protein NfuA"/>
    <property type="match status" value="1"/>
</dbReference>
<dbReference type="FunFam" id="3.30.300.130:FF:000002">
    <property type="entry name" value="Fe/S biogenesis protein NfuA"/>
    <property type="match status" value="1"/>
</dbReference>
<dbReference type="Gene3D" id="3.30.300.130">
    <property type="entry name" value="Fe-S cluster assembly (FSCA)"/>
    <property type="match status" value="1"/>
</dbReference>
<dbReference type="Gene3D" id="2.60.300.12">
    <property type="entry name" value="HesB-like domain"/>
    <property type="match status" value="1"/>
</dbReference>
<dbReference type="HAMAP" id="MF_01637">
    <property type="entry name" value="Fe_S_biogen_NfuA"/>
    <property type="match status" value="1"/>
</dbReference>
<dbReference type="InterPro" id="IPR017726">
    <property type="entry name" value="Fe/S_biogenesis_protein_NfuA"/>
</dbReference>
<dbReference type="InterPro" id="IPR000361">
    <property type="entry name" value="FeS_biogenesis"/>
</dbReference>
<dbReference type="InterPro" id="IPR034904">
    <property type="entry name" value="FSCA_dom_sf"/>
</dbReference>
<dbReference type="InterPro" id="IPR035903">
    <property type="entry name" value="HesB-like_dom_sf"/>
</dbReference>
<dbReference type="InterPro" id="IPR001075">
    <property type="entry name" value="NIF_FeS_clus_asmbl_NifU_C"/>
</dbReference>
<dbReference type="NCBIfam" id="NF008392">
    <property type="entry name" value="PRK11190.1"/>
    <property type="match status" value="1"/>
</dbReference>
<dbReference type="NCBIfam" id="TIGR03341">
    <property type="entry name" value="YhgI_GntY"/>
    <property type="match status" value="1"/>
</dbReference>
<dbReference type="PANTHER" id="PTHR11178:SF51">
    <property type="entry name" value="FE_S BIOGENESIS PROTEIN NFUA"/>
    <property type="match status" value="1"/>
</dbReference>
<dbReference type="PANTHER" id="PTHR11178">
    <property type="entry name" value="IRON-SULFUR CLUSTER SCAFFOLD PROTEIN NFU-RELATED"/>
    <property type="match status" value="1"/>
</dbReference>
<dbReference type="Pfam" id="PF01521">
    <property type="entry name" value="Fe-S_biosyn"/>
    <property type="match status" value="1"/>
</dbReference>
<dbReference type="Pfam" id="PF01106">
    <property type="entry name" value="NifU"/>
    <property type="match status" value="1"/>
</dbReference>
<dbReference type="SUPFAM" id="SSF117916">
    <property type="entry name" value="Fe-S cluster assembly (FSCA) domain-like"/>
    <property type="match status" value="1"/>
</dbReference>
<dbReference type="SUPFAM" id="SSF89360">
    <property type="entry name" value="HesB-like domain"/>
    <property type="match status" value="1"/>
</dbReference>
<proteinExistence type="inferred from homology"/>
<organism>
    <name type="scientific">Citrobacter koseri (strain ATCC BAA-895 / CDC 4225-83 / SGSC4696)</name>
    <dbReference type="NCBI Taxonomy" id="290338"/>
    <lineage>
        <taxon>Bacteria</taxon>
        <taxon>Pseudomonadati</taxon>
        <taxon>Pseudomonadota</taxon>
        <taxon>Gammaproteobacteria</taxon>
        <taxon>Enterobacterales</taxon>
        <taxon>Enterobacteriaceae</taxon>
        <taxon>Citrobacter</taxon>
    </lineage>
</organism>
<protein>
    <recommendedName>
        <fullName evidence="1">Fe/S biogenesis protein NfuA</fullName>
    </recommendedName>
</protein>
<name>NFUA_CITK8</name>
<reference key="1">
    <citation type="submission" date="2007-08" db="EMBL/GenBank/DDBJ databases">
        <authorList>
            <consortium name="The Citrobacter koseri Genome Sequencing Project"/>
            <person name="McClelland M."/>
            <person name="Sanderson E.K."/>
            <person name="Porwollik S."/>
            <person name="Spieth J."/>
            <person name="Clifton W.S."/>
            <person name="Latreille P."/>
            <person name="Courtney L."/>
            <person name="Wang C."/>
            <person name="Pepin K."/>
            <person name="Bhonagiri V."/>
            <person name="Nash W."/>
            <person name="Johnson M."/>
            <person name="Thiruvilangam P."/>
            <person name="Wilson R."/>
        </authorList>
    </citation>
    <scope>NUCLEOTIDE SEQUENCE [LARGE SCALE GENOMIC DNA]</scope>
    <source>
        <strain>ATCC BAA-895 / CDC 4225-83 / SGSC4696</strain>
    </source>
</reference>
<sequence length="191" mass="20965">MIHISDAAQAHFAKLLANQEEGTQIRVFVINPGTPNAECGVSYCPPDAVEASDTALKFDLLTAYVDELSAPYLEDAEIDFVTDQLGSQLTLKAPNAKMRKVADDAPLMERVEYMLQSQINPQLAGHGGRVSLMEITDEGYAILQFGGGCNGCSMVDVTLKEGIEKQLLNEFPELKGVRDLTEHQRGEHSYY</sequence>
<comment type="function">
    <text evidence="1">Involved in iron-sulfur cluster biogenesis. Binds a 4Fe-4S cluster, can transfer this cluster to apoproteins, and thereby intervenes in the maturation of Fe/S proteins. Could also act as a scaffold/chaperone for damaged Fe/S proteins.</text>
</comment>
<comment type="cofactor">
    <cofactor evidence="1">
        <name>[4Fe-4S] cluster</name>
        <dbReference type="ChEBI" id="CHEBI:49883"/>
    </cofactor>
    <text evidence="1">Binds 1 [4Fe-4S] cluster per subunit. The cluster is presumably bound at the interface of two monomers.</text>
</comment>
<comment type="subunit">
    <text evidence="1">Homodimer.</text>
</comment>
<comment type="similarity">
    <text evidence="1">Belongs to the NfuA family.</text>
</comment>
<feature type="chain" id="PRO_1000069866" description="Fe/S biogenesis protein NfuA">
    <location>
        <begin position="1"/>
        <end position="191"/>
    </location>
</feature>
<feature type="binding site" evidence="1">
    <location>
        <position position="149"/>
    </location>
    <ligand>
        <name>[4Fe-4S] cluster</name>
        <dbReference type="ChEBI" id="CHEBI:49883"/>
    </ligand>
</feature>
<feature type="binding site" evidence="1">
    <location>
        <position position="152"/>
    </location>
    <ligand>
        <name>[4Fe-4S] cluster</name>
        <dbReference type="ChEBI" id="CHEBI:49883"/>
    </ligand>
</feature>
<keyword id="KW-0004">4Fe-4S</keyword>
<keyword id="KW-0408">Iron</keyword>
<keyword id="KW-0411">Iron-sulfur</keyword>
<keyword id="KW-0479">Metal-binding</keyword>
<keyword id="KW-1185">Reference proteome</keyword>
<gene>
    <name evidence="1" type="primary">nfuA</name>
    <name type="ordered locus">CKO_04835</name>
</gene>
<evidence type="ECO:0000255" key="1">
    <source>
        <dbReference type="HAMAP-Rule" id="MF_01637"/>
    </source>
</evidence>
<accession>A8AQW7</accession>